<gene>
    <name type="ORF">SPCC320.06</name>
</gene>
<name>YCN6_SCHPO</name>
<organism>
    <name type="scientific">Schizosaccharomyces pombe (strain 972 / ATCC 24843)</name>
    <name type="common">Fission yeast</name>
    <dbReference type="NCBI Taxonomy" id="284812"/>
    <lineage>
        <taxon>Eukaryota</taxon>
        <taxon>Fungi</taxon>
        <taxon>Dikarya</taxon>
        <taxon>Ascomycota</taxon>
        <taxon>Taphrinomycotina</taxon>
        <taxon>Schizosaccharomycetes</taxon>
        <taxon>Schizosaccharomycetales</taxon>
        <taxon>Schizosaccharomycetaceae</taxon>
        <taxon>Schizosaccharomyces</taxon>
    </lineage>
</organism>
<reference key="1">
    <citation type="journal article" date="2002" name="Nature">
        <title>The genome sequence of Schizosaccharomyces pombe.</title>
        <authorList>
            <person name="Wood V."/>
            <person name="Gwilliam R."/>
            <person name="Rajandream M.A."/>
            <person name="Lyne M.H."/>
            <person name="Lyne R."/>
            <person name="Stewart A."/>
            <person name="Sgouros J.G."/>
            <person name="Peat N."/>
            <person name="Hayles J."/>
            <person name="Baker S.G."/>
            <person name="Basham D."/>
            <person name="Bowman S."/>
            <person name="Brooks K."/>
            <person name="Brown D."/>
            <person name="Brown S."/>
            <person name="Chillingworth T."/>
            <person name="Churcher C.M."/>
            <person name="Collins M."/>
            <person name="Connor R."/>
            <person name="Cronin A."/>
            <person name="Davis P."/>
            <person name="Feltwell T."/>
            <person name="Fraser A."/>
            <person name="Gentles S."/>
            <person name="Goble A."/>
            <person name="Hamlin N."/>
            <person name="Harris D.E."/>
            <person name="Hidalgo J."/>
            <person name="Hodgson G."/>
            <person name="Holroyd S."/>
            <person name="Hornsby T."/>
            <person name="Howarth S."/>
            <person name="Huckle E.J."/>
            <person name="Hunt S."/>
            <person name="Jagels K."/>
            <person name="James K.D."/>
            <person name="Jones L."/>
            <person name="Jones M."/>
            <person name="Leather S."/>
            <person name="McDonald S."/>
            <person name="McLean J."/>
            <person name="Mooney P."/>
            <person name="Moule S."/>
            <person name="Mungall K.L."/>
            <person name="Murphy L.D."/>
            <person name="Niblett D."/>
            <person name="Odell C."/>
            <person name="Oliver K."/>
            <person name="O'Neil S."/>
            <person name="Pearson D."/>
            <person name="Quail M.A."/>
            <person name="Rabbinowitsch E."/>
            <person name="Rutherford K.M."/>
            <person name="Rutter S."/>
            <person name="Saunders D."/>
            <person name="Seeger K."/>
            <person name="Sharp S."/>
            <person name="Skelton J."/>
            <person name="Simmonds M.N."/>
            <person name="Squares R."/>
            <person name="Squares S."/>
            <person name="Stevens K."/>
            <person name="Taylor K."/>
            <person name="Taylor R.G."/>
            <person name="Tivey A."/>
            <person name="Walsh S.V."/>
            <person name="Warren T."/>
            <person name="Whitehead S."/>
            <person name="Woodward J.R."/>
            <person name="Volckaert G."/>
            <person name="Aert R."/>
            <person name="Robben J."/>
            <person name="Grymonprez B."/>
            <person name="Weltjens I."/>
            <person name="Vanstreels E."/>
            <person name="Rieger M."/>
            <person name="Schaefer M."/>
            <person name="Mueller-Auer S."/>
            <person name="Gabel C."/>
            <person name="Fuchs M."/>
            <person name="Duesterhoeft A."/>
            <person name="Fritzc C."/>
            <person name="Holzer E."/>
            <person name="Moestl D."/>
            <person name="Hilbert H."/>
            <person name="Borzym K."/>
            <person name="Langer I."/>
            <person name="Beck A."/>
            <person name="Lehrach H."/>
            <person name="Reinhardt R."/>
            <person name="Pohl T.M."/>
            <person name="Eger P."/>
            <person name="Zimmermann W."/>
            <person name="Wedler H."/>
            <person name="Wambutt R."/>
            <person name="Purnelle B."/>
            <person name="Goffeau A."/>
            <person name="Cadieu E."/>
            <person name="Dreano S."/>
            <person name="Gloux S."/>
            <person name="Lelaure V."/>
            <person name="Mottier S."/>
            <person name="Galibert F."/>
            <person name="Aves S.J."/>
            <person name="Xiang Z."/>
            <person name="Hunt C."/>
            <person name="Moore K."/>
            <person name="Hurst S.M."/>
            <person name="Lucas M."/>
            <person name="Rochet M."/>
            <person name="Gaillardin C."/>
            <person name="Tallada V.A."/>
            <person name="Garzon A."/>
            <person name="Thode G."/>
            <person name="Daga R.R."/>
            <person name="Cruzado L."/>
            <person name="Jimenez J."/>
            <person name="Sanchez M."/>
            <person name="del Rey F."/>
            <person name="Benito J."/>
            <person name="Dominguez A."/>
            <person name="Revuelta J.L."/>
            <person name="Moreno S."/>
            <person name="Armstrong J."/>
            <person name="Forsburg S.L."/>
            <person name="Cerutti L."/>
            <person name="Lowe T."/>
            <person name="McCombie W.R."/>
            <person name="Paulsen I."/>
            <person name="Potashkin J."/>
            <person name="Shpakovski G.V."/>
            <person name="Ussery D."/>
            <person name="Barrell B.G."/>
            <person name="Nurse P."/>
        </authorList>
    </citation>
    <scope>NUCLEOTIDE SEQUENCE [LARGE SCALE GENOMIC DNA]</scope>
    <source>
        <strain>972 / ATCC 24843</strain>
    </source>
</reference>
<feature type="chain" id="PRO_0000116553" description="Uncharacterized protein C320.06">
    <location>
        <begin position="1"/>
        <end position="289"/>
    </location>
</feature>
<accession>O59783</accession>
<keyword id="KW-1185">Reference proteome</keyword>
<proteinExistence type="predicted"/>
<sequence>MVLISNTLHCADAYSSADSKHVPLTLSTRRINLQSFQSISARNCGSDARVLDFVKSIDNDNSWKRRNLDSKRNIGSRKKNRFLNDLHILKQAADDPDEVVYKDLFTHRPAFGFLTVGDEFYKDGVNNISSLLTSSSNQRFNDNHHKSIVKRIRHEIKCYNSLQLVLLLDECLNNIMNEKLYAYDHDHSPAIYASESFNIKAEIDTSSFLETQRSYRIYMLIDCPSNPKATAFARYWMHLICSYYGIYTTSTQILSNKIMTLGVSKKRKHLSFKTLSELLNHDELTNINR</sequence>
<dbReference type="EMBL" id="CU329672">
    <property type="protein sequence ID" value="CAA18308.1"/>
    <property type="molecule type" value="Genomic_DNA"/>
</dbReference>
<dbReference type="PIR" id="T41305">
    <property type="entry name" value="T41305"/>
</dbReference>
<dbReference type="RefSeq" id="NP_587723.1">
    <property type="nucleotide sequence ID" value="NM_001022718.2"/>
</dbReference>
<dbReference type="SMR" id="O59783"/>
<dbReference type="BioGRID" id="275569">
    <property type="interactions" value="1"/>
</dbReference>
<dbReference type="PaxDb" id="4896-SPCC320.06.1"/>
<dbReference type="EnsemblFungi" id="SPCC320.06.1">
    <property type="protein sequence ID" value="SPCC320.06.1:pep"/>
    <property type="gene ID" value="SPCC320.06"/>
</dbReference>
<dbReference type="KEGG" id="spo:2538995"/>
<dbReference type="PomBase" id="SPCC320.06"/>
<dbReference type="VEuPathDB" id="FungiDB:SPCC320.06"/>
<dbReference type="HOGENOM" id="CLU_937375_0_0_1"/>
<dbReference type="InParanoid" id="O59783"/>
<dbReference type="OMA" id="ARYWIHL"/>
<dbReference type="PRO" id="PR:O59783"/>
<dbReference type="Proteomes" id="UP000002485">
    <property type="component" value="Chromosome III"/>
</dbReference>
<dbReference type="GO" id="GO:0005829">
    <property type="term" value="C:cytosol"/>
    <property type="evidence" value="ECO:0007005"/>
    <property type="project" value="PomBase"/>
</dbReference>
<dbReference type="GO" id="GO:0005634">
    <property type="term" value="C:nucleus"/>
    <property type="evidence" value="ECO:0007005"/>
    <property type="project" value="PomBase"/>
</dbReference>
<protein>
    <recommendedName>
        <fullName>Uncharacterized protein C320.06</fullName>
    </recommendedName>
</protein>